<comment type="subunit">
    <text evidence="1">Part of the 30S ribosomal subunit.</text>
</comment>
<comment type="subcellular location">
    <subcellularLocation>
        <location>Plastid</location>
        <location>Chloroplast</location>
    </subcellularLocation>
</comment>
<comment type="similarity">
    <text evidence="2">Belongs to the universal ribosomal protein uS3 family.</text>
</comment>
<name>RR3_RANMC</name>
<reference key="1">
    <citation type="journal article" date="2005" name="Mol. Biol. Evol.">
        <title>Identifying the basal angiosperm node in chloroplast genome phylogenies: sampling one's way out of the Felsenstein zone.</title>
        <authorList>
            <person name="Leebens-Mack J."/>
            <person name="Raubeson L.A."/>
            <person name="Cui L."/>
            <person name="Kuehl J.V."/>
            <person name="Fourcade M.H."/>
            <person name="Chumley T.W."/>
            <person name="Boore J.L."/>
            <person name="Jansen R.K."/>
            <person name="dePamphilis C.W."/>
        </authorList>
    </citation>
    <scope>NUCLEOTIDE SEQUENCE [GENOMIC DNA]</scope>
</reference>
<reference key="2">
    <citation type="journal article" date="2007" name="BMC Genomics">
        <title>Comparative chloroplast genomics: analyses including new sequences from the angiosperms Nuphar advena and Ranunculus macranthus.</title>
        <authorList>
            <person name="Raubeson L.A."/>
            <person name="Peery R."/>
            <person name="Chumley T.W."/>
            <person name="Dziubek C."/>
            <person name="Fourcade H.M."/>
            <person name="Boore J.L."/>
            <person name="Jansen R.K."/>
        </authorList>
    </citation>
    <scope>NUCLEOTIDE SEQUENCE [LARGE SCALE GENOMIC DNA]</scope>
</reference>
<accession>Q4FG71</accession>
<geneLocation type="chloroplast"/>
<keyword id="KW-0150">Chloroplast</keyword>
<keyword id="KW-0934">Plastid</keyword>
<keyword id="KW-0687">Ribonucleoprotein</keyword>
<keyword id="KW-0689">Ribosomal protein</keyword>
<keyword id="KW-0694">RNA-binding</keyword>
<keyword id="KW-0699">rRNA-binding</keyword>
<proteinExistence type="inferred from homology"/>
<sequence>MGQKINPLGFRLGTTQSHHSVWFAQPKNYSGGLQEDKKIKDCIKNYVQKNRKISSGVEGIARIKIKKRIDLIQVIIYMGFPKFLEGNPQGIEELQSNIQKEFNSVNQKLNIAITRIAKPYGQPNILAEFIAGQLKNRVSFRKAMKKAIELTEQADTKGIQIQIAGRIDGKEIARVEWIREGRVPLQTIRAKIDYCSYTVRTIYGALGIKIWIFAGEE</sequence>
<dbReference type="EMBL" id="DQ069460">
    <property type="protein sequence ID" value="AAZ03898.1"/>
    <property type="molecule type" value="Genomic_DNA"/>
</dbReference>
<dbReference type="EMBL" id="DQ359689">
    <property type="protein sequence ID" value="ABC70794.1"/>
    <property type="molecule type" value="Genomic_DNA"/>
</dbReference>
<dbReference type="RefSeq" id="YP_001004224.1">
    <property type="nucleotide sequence ID" value="NC_008796.1"/>
</dbReference>
<dbReference type="SMR" id="Q4FG71"/>
<dbReference type="GeneID" id="4712173"/>
<dbReference type="GO" id="GO:0009507">
    <property type="term" value="C:chloroplast"/>
    <property type="evidence" value="ECO:0007669"/>
    <property type="project" value="UniProtKB-SubCell"/>
</dbReference>
<dbReference type="GO" id="GO:0022627">
    <property type="term" value="C:cytosolic small ribosomal subunit"/>
    <property type="evidence" value="ECO:0007669"/>
    <property type="project" value="TreeGrafter"/>
</dbReference>
<dbReference type="GO" id="GO:0019843">
    <property type="term" value="F:rRNA binding"/>
    <property type="evidence" value="ECO:0007669"/>
    <property type="project" value="UniProtKB-KW"/>
</dbReference>
<dbReference type="GO" id="GO:0003735">
    <property type="term" value="F:structural constituent of ribosome"/>
    <property type="evidence" value="ECO:0007669"/>
    <property type="project" value="InterPro"/>
</dbReference>
<dbReference type="GO" id="GO:0006412">
    <property type="term" value="P:translation"/>
    <property type="evidence" value="ECO:0007669"/>
    <property type="project" value="UniProtKB-UniRule"/>
</dbReference>
<dbReference type="CDD" id="cd02412">
    <property type="entry name" value="KH-II_30S_S3"/>
    <property type="match status" value="1"/>
</dbReference>
<dbReference type="FunFam" id="3.30.1140.32:FF:000003">
    <property type="entry name" value="30S ribosomal protein S3, chloroplastic"/>
    <property type="match status" value="1"/>
</dbReference>
<dbReference type="FunFam" id="3.30.300.20:FF:000008">
    <property type="entry name" value="30S ribosomal protein S3, chloroplastic"/>
    <property type="match status" value="1"/>
</dbReference>
<dbReference type="Gene3D" id="3.30.300.20">
    <property type="match status" value="1"/>
</dbReference>
<dbReference type="Gene3D" id="3.30.1140.32">
    <property type="entry name" value="Ribosomal protein S3, C-terminal domain"/>
    <property type="match status" value="1"/>
</dbReference>
<dbReference type="HAMAP" id="MF_01309_B">
    <property type="entry name" value="Ribosomal_uS3_B"/>
    <property type="match status" value="1"/>
</dbReference>
<dbReference type="InterPro" id="IPR015946">
    <property type="entry name" value="KH_dom-like_a/b"/>
</dbReference>
<dbReference type="InterPro" id="IPR009019">
    <property type="entry name" value="KH_sf_prok-type"/>
</dbReference>
<dbReference type="InterPro" id="IPR036419">
    <property type="entry name" value="Ribosomal_S3_C_sf"/>
</dbReference>
<dbReference type="InterPro" id="IPR005704">
    <property type="entry name" value="Ribosomal_uS3_bac-typ"/>
</dbReference>
<dbReference type="InterPro" id="IPR001351">
    <property type="entry name" value="Ribosomal_uS3_C"/>
</dbReference>
<dbReference type="InterPro" id="IPR018280">
    <property type="entry name" value="Ribosomal_uS3_CS"/>
</dbReference>
<dbReference type="NCBIfam" id="TIGR01009">
    <property type="entry name" value="rpsC_bact"/>
    <property type="match status" value="1"/>
</dbReference>
<dbReference type="PANTHER" id="PTHR11760">
    <property type="entry name" value="30S/40S RIBOSOMAL PROTEIN S3"/>
    <property type="match status" value="1"/>
</dbReference>
<dbReference type="PANTHER" id="PTHR11760:SF19">
    <property type="entry name" value="SMALL RIBOSOMAL SUBUNIT PROTEIN US3C"/>
    <property type="match status" value="1"/>
</dbReference>
<dbReference type="Pfam" id="PF00189">
    <property type="entry name" value="Ribosomal_S3_C"/>
    <property type="match status" value="1"/>
</dbReference>
<dbReference type="SUPFAM" id="SSF54814">
    <property type="entry name" value="Prokaryotic type KH domain (KH-domain type II)"/>
    <property type="match status" value="1"/>
</dbReference>
<dbReference type="SUPFAM" id="SSF54821">
    <property type="entry name" value="Ribosomal protein S3 C-terminal domain"/>
    <property type="match status" value="1"/>
</dbReference>
<dbReference type="PROSITE" id="PS00548">
    <property type="entry name" value="RIBOSOMAL_S3"/>
    <property type="match status" value="1"/>
</dbReference>
<protein>
    <recommendedName>
        <fullName evidence="2">Small ribosomal subunit protein uS3c</fullName>
    </recommendedName>
    <alternativeName>
        <fullName>30S ribosomal protein S3, chloroplastic</fullName>
    </alternativeName>
</protein>
<gene>
    <name type="primary">rps3</name>
</gene>
<feature type="chain" id="PRO_0000293956" description="Small ribosomal subunit protein uS3c">
    <location>
        <begin position="1"/>
        <end position="217"/>
    </location>
</feature>
<feature type="domain" description="KH type-2">
    <location>
        <begin position="43"/>
        <end position="117"/>
    </location>
</feature>
<evidence type="ECO:0000250" key="1"/>
<evidence type="ECO:0000305" key="2"/>
<organism>
    <name type="scientific">Ranunculus macranthus</name>
    <name type="common">Large buttercup</name>
    <dbReference type="NCBI Taxonomy" id="334596"/>
    <lineage>
        <taxon>Eukaryota</taxon>
        <taxon>Viridiplantae</taxon>
        <taxon>Streptophyta</taxon>
        <taxon>Embryophyta</taxon>
        <taxon>Tracheophyta</taxon>
        <taxon>Spermatophyta</taxon>
        <taxon>Magnoliopsida</taxon>
        <taxon>Ranunculales</taxon>
        <taxon>Ranunculaceae</taxon>
        <taxon>Ranunculoideae</taxon>
        <taxon>Ranunculeae</taxon>
        <taxon>Ranunculus</taxon>
    </lineage>
</organism>